<accession>Q02GV9</accession>
<protein>
    <recommendedName>
        <fullName evidence="1">Aspartyl/glutamyl-tRNA(Asn/Gln) amidotransferase subunit C</fullName>
        <shortName evidence="1">Asp/Glu-ADT subunit C</shortName>
        <ecNumber evidence="1">6.3.5.-</ecNumber>
    </recommendedName>
</protein>
<sequence>MALERSDVEKIAHLARLGLSEADLPRTTETLNNILGLIDQMQAVDTSGVEPLAHPLEATQRLRPDAVTETDHRDAYQTIAPAVEEGLYLVPKVIE</sequence>
<dbReference type="EC" id="6.3.5.-" evidence="1"/>
<dbReference type="EMBL" id="CP000438">
    <property type="protein sequence ID" value="ABJ13750.1"/>
    <property type="molecule type" value="Genomic_DNA"/>
</dbReference>
<dbReference type="RefSeq" id="WP_003094397.1">
    <property type="nucleotide sequence ID" value="NZ_CP034244.1"/>
</dbReference>
<dbReference type="SMR" id="Q02GV9"/>
<dbReference type="GeneID" id="77222983"/>
<dbReference type="KEGG" id="pau:PA14_58170"/>
<dbReference type="PseudoCAP" id="PA14_58170"/>
<dbReference type="HOGENOM" id="CLU_105899_2_2_6"/>
<dbReference type="BioCyc" id="PAER208963:G1G74-4900-MONOMER"/>
<dbReference type="Proteomes" id="UP000000653">
    <property type="component" value="Chromosome"/>
</dbReference>
<dbReference type="GO" id="GO:0050566">
    <property type="term" value="F:asparaginyl-tRNA synthase (glutamine-hydrolyzing) activity"/>
    <property type="evidence" value="ECO:0007669"/>
    <property type="project" value="RHEA"/>
</dbReference>
<dbReference type="GO" id="GO:0005524">
    <property type="term" value="F:ATP binding"/>
    <property type="evidence" value="ECO:0007669"/>
    <property type="project" value="UniProtKB-KW"/>
</dbReference>
<dbReference type="GO" id="GO:0050567">
    <property type="term" value="F:glutaminyl-tRNA synthase (glutamine-hydrolyzing) activity"/>
    <property type="evidence" value="ECO:0007669"/>
    <property type="project" value="UniProtKB-UniRule"/>
</dbReference>
<dbReference type="GO" id="GO:0070681">
    <property type="term" value="P:glutaminyl-tRNAGln biosynthesis via transamidation"/>
    <property type="evidence" value="ECO:0007669"/>
    <property type="project" value="TreeGrafter"/>
</dbReference>
<dbReference type="GO" id="GO:0006450">
    <property type="term" value="P:regulation of translational fidelity"/>
    <property type="evidence" value="ECO:0007669"/>
    <property type="project" value="InterPro"/>
</dbReference>
<dbReference type="GO" id="GO:0006412">
    <property type="term" value="P:translation"/>
    <property type="evidence" value="ECO:0007669"/>
    <property type="project" value="UniProtKB-UniRule"/>
</dbReference>
<dbReference type="Gene3D" id="1.10.20.60">
    <property type="entry name" value="Glu-tRNAGln amidotransferase C subunit, N-terminal domain"/>
    <property type="match status" value="1"/>
</dbReference>
<dbReference type="HAMAP" id="MF_00122">
    <property type="entry name" value="GatC"/>
    <property type="match status" value="1"/>
</dbReference>
<dbReference type="InterPro" id="IPR036113">
    <property type="entry name" value="Asp/Glu-ADT_sf_sub_c"/>
</dbReference>
<dbReference type="InterPro" id="IPR003837">
    <property type="entry name" value="GatC"/>
</dbReference>
<dbReference type="NCBIfam" id="TIGR00135">
    <property type="entry name" value="gatC"/>
    <property type="match status" value="1"/>
</dbReference>
<dbReference type="PANTHER" id="PTHR15004">
    <property type="entry name" value="GLUTAMYL-TRNA(GLN) AMIDOTRANSFERASE SUBUNIT C, MITOCHONDRIAL"/>
    <property type="match status" value="1"/>
</dbReference>
<dbReference type="PANTHER" id="PTHR15004:SF0">
    <property type="entry name" value="GLUTAMYL-TRNA(GLN) AMIDOTRANSFERASE SUBUNIT C, MITOCHONDRIAL"/>
    <property type="match status" value="1"/>
</dbReference>
<dbReference type="Pfam" id="PF02686">
    <property type="entry name" value="GatC"/>
    <property type="match status" value="1"/>
</dbReference>
<dbReference type="SUPFAM" id="SSF141000">
    <property type="entry name" value="Glu-tRNAGln amidotransferase C subunit"/>
    <property type="match status" value="1"/>
</dbReference>
<evidence type="ECO:0000255" key="1">
    <source>
        <dbReference type="HAMAP-Rule" id="MF_00122"/>
    </source>
</evidence>
<keyword id="KW-0067">ATP-binding</keyword>
<keyword id="KW-0436">Ligase</keyword>
<keyword id="KW-0547">Nucleotide-binding</keyword>
<keyword id="KW-0648">Protein biosynthesis</keyword>
<organism>
    <name type="scientific">Pseudomonas aeruginosa (strain UCBPP-PA14)</name>
    <dbReference type="NCBI Taxonomy" id="208963"/>
    <lineage>
        <taxon>Bacteria</taxon>
        <taxon>Pseudomonadati</taxon>
        <taxon>Pseudomonadota</taxon>
        <taxon>Gammaproteobacteria</taxon>
        <taxon>Pseudomonadales</taxon>
        <taxon>Pseudomonadaceae</taxon>
        <taxon>Pseudomonas</taxon>
    </lineage>
</organism>
<feature type="chain" id="PRO_1000016179" description="Aspartyl/glutamyl-tRNA(Asn/Gln) amidotransferase subunit C">
    <location>
        <begin position="1"/>
        <end position="95"/>
    </location>
</feature>
<comment type="function">
    <text evidence="1">Allows the formation of correctly charged Asn-tRNA(Asn) or Gln-tRNA(Gln) through the transamidation of misacylated Asp-tRNA(Asn) or Glu-tRNA(Gln) in organisms which lack either or both of asparaginyl-tRNA or glutaminyl-tRNA synthetases. The reaction takes place in the presence of glutamine and ATP through an activated phospho-Asp-tRNA(Asn) or phospho-Glu-tRNA(Gln).</text>
</comment>
<comment type="catalytic activity">
    <reaction evidence="1">
        <text>L-glutamyl-tRNA(Gln) + L-glutamine + ATP + H2O = L-glutaminyl-tRNA(Gln) + L-glutamate + ADP + phosphate + H(+)</text>
        <dbReference type="Rhea" id="RHEA:17521"/>
        <dbReference type="Rhea" id="RHEA-COMP:9681"/>
        <dbReference type="Rhea" id="RHEA-COMP:9684"/>
        <dbReference type="ChEBI" id="CHEBI:15377"/>
        <dbReference type="ChEBI" id="CHEBI:15378"/>
        <dbReference type="ChEBI" id="CHEBI:29985"/>
        <dbReference type="ChEBI" id="CHEBI:30616"/>
        <dbReference type="ChEBI" id="CHEBI:43474"/>
        <dbReference type="ChEBI" id="CHEBI:58359"/>
        <dbReference type="ChEBI" id="CHEBI:78520"/>
        <dbReference type="ChEBI" id="CHEBI:78521"/>
        <dbReference type="ChEBI" id="CHEBI:456216"/>
    </reaction>
</comment>
<comment type="catalytic activity">
    <reaction evidence="1">
        <text>L-aspartyl-tRNA(Asn) + L-glutamine + ATP + H2O = L-asparaginyl-tRNA(Asn) + L-glutamate + ADP + phosphate + 2 H(+)</text>
        <dbReference type="Rhea" id="RHEA:14513"/>
        <dbReference type="Rhea" id="RHEA-COMP:9674"/>
        <dbReference type="Rhea" id="RHEA-COMP:9677"/>
        <dbReference type="ChEBI" id="CHEBI:15377"/>
        <dbReference type="ChEBI" id="CHEBI:15378"/>
        <dbReference type="ChEBI" id="CHEBI:29985"/>
        <dbReference type="ChEBI" id="CHEBI:30616"/>
        <dbReference type="ChEBI" id="CHEBI:43474"/>
        <dbReference type="ChEBI" id="CHEBI:58359"/>
        <dbReference type="ChEBI" id="CHEBI:78515"/>
        <dbReference type="ChEBI" id="CHEBI:78516"/>
        <dbReference type="ChEBI" id="CHEBI:456216"/>
    </reaction>
</comment>
<comment type="subunit">
    <text evidence="1">Heterotrimer of A, B and C subunits.</text>
</comment>
<comment type="similarity">
    <text evidence="1">Belongs to the GatC family.</text>
</comment>
<name>GATC_PSEAB</name>
<proteinExistence type="inferred from homology"/>
<gene>
    <name evidence="1" type="primary">gatC</name>
    <name type="ordered locus">PA14_58170</name>
</gene>
<reference key="1">
    <citation type="journal article" date="2006" name="Genome Biol.">
        <title>Genomic analysis reveals that Pseudomonas aeruginosa virulence is combinatorial.</title>
        <authorList>
            <person name="Lee D.G."/>
            <person name="Urbach J.M."/>
            <person name="Wu G."/>
            <person name="Liberati N.T."/>
            <person name="Feinbaum R.L."/>
            <person name="Miyata S."/>
            <person name="Diggins L.T."/>
            <person name="He J."/>
            <person name="Saucier M."/>
            <person name="Deziel E."/>
            <person name="Friedman L."/>
            <person name="Li L."/>
            <person name="Grills G."/>
            <person name="Montgomery K."/>
            <person name="Kucherlapati R."/>
            <person name="Rahme L.G."/>
            <person name="Ausubel F.M."/>
        </authorList>
    </citation>
    <scope>NUCLEOTIDE SEQUENCE [LARGE SCALE GENOMIC DNA]</scope>
    <source>
        <strain>UCBPP-PA14</strain>
    </source>
</reference>